<feature type="chain" id="PRO_0000340519" description="Urease accessory protein UreD">
    <location>
        <begin position="1"/>
        <end position="312"/>
    </location>
</feature>
<feature type="region of interest" description="Disordered" evidence="2">
    <location>
        <begin position="1"/>
        <end position="50"/>
    </location>
</feature>
<sequence>MRPLAPDARCAPSRPGRGPWYARRPVTTPSDPPAALREPPPPARRAGKAGSGELVFTRVAGRTVLEKALARSPLKLLAPKNHGQAAWVFVASFGGGLVGGDELNLHARVGRGAAALLSTQASTKVYRSPLVSRQRLEAEVQAGGLLVAIPDPVVCFAGSRYEQDIDVALADDASLVLVDALSSGRSARGERWAFDRYASRVRVSRGGRAVLLDATRLDPAHGALPERMGRFDALATLVALGPRAASAAEALLAPRPPPERRAELVASASPLRGGGAVVRVAGTSVERVAGFLRGALAFLAGELGDDPFARKW</sequence>
<keyword id="KW-0143">Chaperone</keyword>
<keyword id="KW-0963">Cytoplasm</keyword>
<keyword id="KW-0996">Nickel insertion</keyword>
<keyword id="KW-1185">Reference proteome</keyword>
<gene>
    <name evidence="1" type="primary">ureD</name>
    <name type="ordered locus">sce6547</name>
</gene>
<evidence type="ECO:0000255" key="1">
    <source>
        <dbReference type="HAMAP-Rule" id="MF_01384"/>
    </source>
</evidence>
<evidence type="ECO:0000256" key="2">
    <source>
        <dbReference type="SAM" id="MobiDB-lite"/>
    </source>
</evidence>
<evidence type="ECO:0000305" key="3"/>
<comment type="function">
    <text evidence="1">Required for maturation of urease via the functional incorporation of the urease nickel metallocenter.</text>
</comment>
<comment type="subunit">
    <text evidence="1">UreD, UreF and UreG form a complex that acts as a GTP-hydrolysis-dependent molecular chaperone, activating the urease apoprotein by helping to assemble the nickel containing metallocenter of UreC. The UreE protein probably delivers the nickel.</text>
</comment>
<comment type="subcellular location">
    <subcellularLocation>
        <location evidence="1">Cytoplasm</location>
    </subcellularLocation>
</comment>
<comment type="similarity">
    <text evidence="1">Belongs to the UreD family.</text>
</comment>
<comment type="sequence caution" evidence="3">
    <conflict type="erroneous initiation">
        <sequence resource="EMBL-CDS" id="CAN96716"/>
    </conflict>
</comment>
<proteinExistence type="inferred from homology"/>
<protein>
    <recommendedName>
        <fullName evidence="1">Urease accessory protein UreD</fullName>
    </recommendedName>
</protein>
<organism>
    <name type="scientific">Sorangium cellulosum (strain So ce56)</name>
    <name type="common">Polyangium cellulosum (strain So ce56)</name>
    <dbReference type="NCBI Taxonomy" id="448385"/>
    <lineage>
        <taxon>Bacteria</taxon>
        <taxon>Pseudomonadati</taxon>
        <taxon>Myxococcota</taxon>
        <taxon>Polyangia</taxon>
        <taxon>Polyangiales</taxon>
        <taxon>Polyangiaceae</taxon>
        <taxon>Sorangium</taxon>
    </lineage>
</organism>
<dbReference type="EMBL" id="AM746676">
    <property type="protein sequence ID" value="CAN96716.1"/>
    <property type="status" value="ALT_INIT"/>
    <property type="molecule type" value="Genomic_DNA"/>
</dbReference>
<dbReference type="SMR" id="A9GP79"/>
<dbReference type="STRING" id="448385.sce6547"/>
<dbReference type="KEGG" id="scl:sce6547"/>
<dbReference type="eggNOG" id="COG0829">
    <property type="taxonomic scope" value="Bacteria"/>
</dbReference>
<dbReference type="HOGENOM" id="CLU_021703_1_0_7"/>
<dbReference type="Proteomes" id="UP000002139">
    <property type="component" value="Chromosome"/>
</dbReference>
<dbReference type="GO" id="GO:0005737">
    <property type="term" value="C:cytoplasm"/>
    <property type="evidence" value="ECO:0007669"/>
    <property type="project" value="UniProtKB-SubCell"/>
</dbReference>
<dbReference type="GO" id="GO:0016151">
    <property type="term" value="F:nickel cation binding"/>
    <property type="evidence" value="ECO:0007669"/>
    <property type="project" value="InterPro"/>
</dbReference>
<dbReference type="HAMAP" id="MF_01384">
    <property type="entry name" value="UreD"/>
    <property type="match status" value="1"/>
</dbReference>
<dbReference type="InterPro" id="IPR002669">
    <property type="entry name" value="UreD"/>
</dbReference>
<dbReference type="PANTHER" id="PTHR33643">
    <property type="entry name" value="UREASE ACCESSORY PROTEIN D"/>
    <property type="match status" value="1"/>
</dbReference>
<dbReference type="PANTHER" id="PTHR33643:SF1">
    <property type="entry name" value="UREASE ACCESSORY PROTEIN D"/>
    <property type="match status" value="1"/>
</dbReference>
<dbReference type="Pfam" id="PF01774">
    <property type="entry name" value="UreD"/>
    <property type="match status" value="1"/>
</dbReference>
<name>URED_SORC5</name>
<reference key="1">
    <citation type="journal article" date="2007" name="Nat. Biotechnol.">
        <title>Complete genome sequence of the myxobacterium Sorangium cellulosum.</title>
        <authorList>
            <person name="Schneiker S."/>
            <person name="Perlova O."/>
            <person name="Kaiser O."/>
            <person name="Gerth K."/>
            <person name="Alici A."/>
            <person name="Altmeyer M.O."/>
            <person name="Bartels D."/>
            <person name="Bekel T."/>
            <person name="Beyer S."/>
            <person name="Bode E."/>
            <person name="Bode H.B."/>
            <person name="Bolten C.J."/>
            <person name="Choudhuri J.V."/>
            <person name="Doss S."/>
            <person name="Elnakady Y.A."/>
            <person name="Frank B."/>
            <person name="Gaigalat L."/>
            <person name="Goesmann A."/>
            <person name="Groeger C."/>
            <person name="Gross F."/>
            <person name="Jelsbak L."/>
            <person name="Jelsbak L."/>
            <person name="Kalinowski J."/>
            <person name="Kegler C."/>
            <person name="Knauber T."/>
            <person name="Konietzny S."/>
            <person name="Kopp M."/>
            <person name="Krause L."/>
            <person name="Krug D."/>
            <person name="Linke B."/>
            <person name="Mahmud T."/>
            <person name="Martinez-Arias R."/>
            <person name="McHardy A.C."/>
            <person name="Merai M."/>
            <person name="Meyer F."/>
            <person name="Mormann S."/>
            <person name="Munoz-Dorado J."/>
            <person name="Perez J."/>
            <person name="Pradella S."/>
            <person name="Rachid S."/>
            <person name="Raddatz G."/>
            <person name="Rosenau F."/>
            <person name="Rueckert C."/>
            <person name="Sasse F."/>
            <person name="Scharfe M."/>
            <person name="Schuster S.C."/>
            <person name="Suen G."/>
            <person name="Treuner-Lange A."/>
            <person name="Velicer G.J."/>
            <person name="Vorholter F.-J."/>
            <person name="Weissman K.J."/>
            <person name="Welch R.D."/>
            <person name="Wenzel S.C."/>
            <person name="Whitworth D.E."/>
            <person name="Wilhelm S."/>
            <person name="Wittmann C."/>
            <person name="Bloecker H."/>
            <person name="Puehler A."/>
            <person name="Mueller R."/>
        </authorList>
    </citation>
    <scope>NUCLEOTIDE SEQUENCE [LARGE SCALE GENOMIC DNA]</scope>
    <source>
        <strain>So ce56</strain>
    </source>
</reference>
<accession>A9GP79</accession>